<keyword id="KW-0963">Cytoplasm</keyword>
<keyword id="KW-0324">Glycolysis</keyword>
<keyword id="KW-0520">NAD</keyword>
<keyword id="KW-0560">Oxidoreductase</keyword>
<keyword id="KW-1185">Reference proteome</keyword>
<sequence>MAVKVGINGFGRIGRIVFRNAVEHPEIEVVAVNDPFIDPEYAAYMLKYDSSHGVFKGEIKKDADGLIVNGKKVKFHTERDPSAIPWKASGAEYIVESTGVFTTTEKAKAHLTGGAKKVIISAPSADAPMYVMGVNEKTYDGKADVISNASCTTNCLAPLAKVIHDKYTIVEGLMTTVHSYTATQKTVDGPSGKDWRGGRGAAQNIIPSSTGAAKAVGKVIPDLNGKLTGMSMRVPTPNVSVVDLTVRIEKGATYDEIKATVKEAANGSLAGILGYTEDDIVSSDMNGNTNSSIFDAKAGISLNKNFVKLIAWYDNEWGYSRRVLDLLAYVAKADASK</sequence>
<name>G3P_CLAP2</name>
<feature type="chain" id="PRO_0000145544" description="Glyceraldehyde-3-phosphate dehydrogenase">
    <location>
        <begin position="1"/>
        <end position="337"/>
    </location>
</feature>
<feature type="active site" description="Nucleophile" evidence="2">
    <location>
        <position position="151"/>
    </location>
</feature>
<feature type="binding site" evidence="1">
    <location>
        <begin position="12"/>
        <end position="13"/>
    </location>
    <ligand>
        <name>NAD(+)</name>
        <dbReference type="ChEBI" id="CHEBI:57540"/>
    </ligand>
</feature>
<feature type="binding site" evidence="1">
    <location>
        <position position="34"/>
    </location>
    <ligand>
        <name>NAD(+)</name>
        <dbReference type="ChEBI" id="CHEBI:57540"/>
    </ligand>
</feature>
<feature type="binding site" evidence="1">
    <location>
        <position position="79"/>
    </location>
    <ligand>
        <name>NAD(+)</name>
        <dbReference type="ChEBI" id="CHEBI:57540"/>
    </ligand>
</feature>
<feature type="binding site" evidence="1">
    <location>
        <begin position="150"/>
        <end position="152"/>
    </location>
    <ligand>
        <name>D-glyceraldehyde 3-phosphate</name>
        <dbReference type="ChEBI" id="CHEBI:59776"/>
    </ligand>
</feature>
<feature type="binding site" evidence="1">
    <location>
        <position position="181"/>
    </location>
    <ligand>
        <name>D-glyceraldehyde 3-phosphate</name>
        <dbReference type="ChEBI" id="CHEBI:59776"/>
    </ligand>
</feature>
<feature type="binding site" evidence="1">
    <location>
        <begin position="210"/>
        <end position="211"/>
    </location>
    <ligand>
        <name>D-glyceraldehyde 3-phosphate</name>
        <dbReference type="ChEBI" id="CHEBI:59776"/>
    </ligand>
</feature>
<feature type="binding site" evidence="1">
    <location>
        <position position="233"/>
    </location>
    <ligand>
        <name>D-glyceraldehyde 3-phosphate</name>
        <dbReference type="ChEBI" id="CHEBI:59776"/>
    </ligand>
</feature>
<feature type="binding site" evidence="1">
    <location>
        <position position="315"/>
    </location>
    <ligand>
        <name>NAD(+)</name>
        <dbReference type="ChEBI" id="CHEBI:57540"/>
    </ligand>
</feature>
<feature type="site" description="Activates thiol group during catalysis" evidence="1">
    <location>
        <position position="178"/>
    </location>
</feature>
<comment type="catalytic activity">
    <reaction evidence="2">
        <text>D-glyceraldehyde 3-phosphate + phosphate + NAD(+) = (2R)-3-phospho-glyceroyl phosphate + NADH + H(+)</text>
        <dbReference type="Rhea" id="RHEA:10300"/>
        <dbReference type="ChEBI" id="CHEBI:15378"/>
        <dbReference type="ChEBI" id="CHEBI:43474"/>
        <dbReference type="ChEBI" id="CHEBI:57540"/>
        <dbReference type="ChEBI" id="CHEBI:57604"/>
        <dbReference type="ChEBI" id="CHEBI:57945"/>
        <dbReference type="ChEBI" id="CHEBI:59776"/>
        <dbReference type="EC" id="1.2.1.12"/>
    </reaction>
</comment>
<comment type="pathway">
    <text>Carbohydrate degradation; glycolysis; pyruvate from D-glyceraldehyde 3-phosphate: step 1/5.</text>
</comment>
<comment type="subunit">
    <text evidence="1">Homotetramer.</text>
</comment>
<comment type="subcellular location">
    <subcellularLocation>
        <location>Cytoplasm</location>
    </subcellularLocation>
</comment>
<comment type="similarity">
    <text evidence="3">Belongs to the glyceraldehyde-3-phosphate dehydrogenase family.</text>
</comment>
<organism>
    <name type="scientific">Claviceps purpurea (strain 20.1)</name>
    <name type="common">Ergot fungus</name>
    <name type="synonym">Sphacelia segetum</name>
    <dbReference type="NCBI Taxonomy" id="1111077"/>
    <lineage>
        <taxon>Eukaryota</taxon>
        <taxon>Fungi</taxon>
        <taxon>Dikarya</taxon>
        <taxon>Ascomycota</taxon>
        <taxon>Pezizomycotina</taxon>
        <taxon>Sordariomycetes</taxon>
        <taxon>Hypocreomycetidae</taxon>
        <taxon>Hypocreales</taxon>
        <taxon>Clavicipitaceae</taxon>
        <taxon>Claviceps</taxon>
    </lineage>
</organism>
<proteinExistence type="inferred from homology"/>
<gene>
    <name type="primary">GPD-1</name>
    <name type="ORF">CPUR_00276</name>
</gene>
<reference key="1">
    <citation type="journal article" date="1994" name="Curr. Genet.">
        <title>The Claviceps purpurea glyceraldehyde-3-phosphate dehydrogenase gene: cloning, characterization, and use for the improvement of a dominant selection system.</title>
        <authorList>
            <person name="Jungehuelsing U."/>
            <person name="Arntz C."/>
            <person name="Smit R."/>
            <person name="Tudzynski P."/>
        </authorList>
    </citation>
    <scope>NUCLEOTIDE SEQUENCE [GENOMIC DNA]</scope>
    <source>
        <strain>T5</strain>
    </source>
</reference>
<reference key="2">
    <citation type="journal article" date="2013" name="PLoS Genet.">
        <title>Plant-symbiotic fungi as chemical engineers: Multi-genome analysis of the Clavicipitaceae reveals dynamics of alkaloid loci.</title>
        <authorList>
            <person name="Schardl C.L."/>
            <person name="Young C.A."/>
            <person name="Hesse U."/>
            <person name="Amyotte S.G."/>
            <person name="Andreeva K."/>
            <person name="Calie P.J."/>
            <person name="Fleetwood D.J."/>
            <person name="Haws D.C."/>
            <person name="Moore N."/>
            <person name="Oeser B."/>
            <person name="Panaccione D.G."/>
            <person name="Schweri K.K."/>
            <person name="Voisey C.R."/>
            <person name="Farman M.L."/>
            <person name="Jaromczyk J.W."/>
            <person name="Roe B.A."/>
            <person name="O'Sullivan D.M."/>
            <person name="Scott B."/>
            <person name="Tudzynski P."/>
            <person name="An Z."/>
            <person name="Arnaoudova E.G."/>
            <person name="Bullock C.T."/>
            <person name="Charlton N.D."/>
            <person name="Chen L."/>
            <person name="Cox M."/>
            <person name="Dinkins R.D."/>
            <person name="Florea S."/>
            <person name="Glenn A.E."/>
            <person name="Gordon A."/>
            <person name="Gueldener U."/>
            <person name="Harris D.R."/>
            <person name="Hollin W."/>
            <person name="Jaromczyk J."/>
            <person name="Johnson R.D."/>
            <person name="Khan A.K."/>
            <person name="Leistner E."/>
            <person name="Leuchtmann A."/>
            <person name="Li C."/>
            <person name="Liu J."/>
            <person name="Liu J."/>
            <person name="Liu M."/>
            <person name="Mace W."/>
            <person name="Machado C."/>
            <person name="Nagabhyru P."/>
            <person name="Pan J."/>
            <person name="Schmid J."/>
            <person name="Sugawara K."/>
            <person name="Steiner U."/>
            <person name="Takach J.E."/>
            <person name="Tanaka E."/>
            <person name="Webb J.S."/>
            <person name="Wilson E.V."/>
            <person name="Wiseman J.L."/>
            <person name="Yoshida R."/>
            <person name="Zeng Z."/>
        </authorList>
    </citation>
    <scope>NUCLEOTIDE SEQUENCE [LARGE SCALE GENOMIC DNA]</scope>
    <source>
        <strain>20.1</strain>
    </source>
</reference>
<evidence type="ECO:0000250" key="1"/>
<evidence type="ECO:0000255" key="2">
    <source>
        <dbReference type="PROSITE-ProRule" id="PRU10009"/>
    </source>
</evidence>
<evidence type="ECO:0000305" key="3"/>
<dbReference type="EC" id="1.2.1.12"/>
<dbReference type="EMBL" id="X73282">
    <property type="protein sequence ID" value="CAA51721.1"/>
    <property type="molecule type" value="Genomic_DNA"/>
</dbReference>
<dbReference type="EMBL" id="CAGA01000002">
    <property type="protein sequence ID" value="CCE26807.1"/>
    <property type="molecule type" value="Genomic_DNA"/>
</dbReference>
<dbReference type="PIR" id="S40610">
    <property type="entry name" value="S40610"/>
</dbReference>
<dbReference type="SMR" id="Q00584"/>
<dbReference type="STRING" id="1111077.Q00584"/>
<dbReference type="VEuPathDB" id="FungiDB:CPUR_00276"/>
<dbReference type="eggNOG" id="KOG0657">
    <property type="taxonomic scope" value="Eukaryota"/>
</dbReference>
<dbReference type="HOGENOM" id="CLU_030140_0_3_1"/>
<dbReference type="OrthoDB" id="1152826at2759"/>
<dbReference type="PhylomeDB" id="Q00584"/>
<dbReference type="UniPathway" id="UPA00109">
    <property type="reaction ID" value="UER00184"/>
</dbReference>
<dbReference type="Proteomes" id="UP000016801">
    <property type="component" value="Unassembled WGS sequence"/>
</dbReference>
<dbReference type="GO" id="GO:0005829">
    <property type="term" value="C:cytosol"/>
    <property type="evidence" value="ECO:0007669"/>
    <property type="project" value="TreeGrafter"/>
</dbReference>
<dbReference type="GO" id="GO:0004365">
    <property type="term" value="F:glyceraldehyde-3-phosphate dehydrogenase (NAD+) (phosphorylating) activity"/>
    <property type="evidence" value="ECO:0007669"/>
    <property type="project" value="UniProtKB-EC"/>
</dbReference>
<dbReference type="GO" id="GO:0051287">
    <property type="term" value="F:NAD binding"/>
    <property type="evidence" value="ECO:0007669"/>
    <property type="project" value="InterPro"/>
</dbReference>
<dbReference type="GO" id="GO:0050661">
    <property type="term" value="F:NADP binding"/>
    <property type="evidence" value="ECO:0007669"/>
    <property type="project" value="InterPro"/>
</dbReference>
<dbReference type="GO" id="GO:0006006">
    <property type="term" value="P:glucose metabolic process"/>
    <property type="evidence" value="ECO:0007669"/>
    <property type="project" value="InterPro"/>
</dbReference>
<dbReference type="GO" id="GO:0006096">
    <property type="term" value="P:glycolytic process"/>
    <property type="evidence" value="ECO:0007669"/>
    <property type="project" value="UniProtKB-UniPathway"/>
</dbReference>
<dbReference type="CDD" id="cd18126">
    <property type="entry name" value="GAPDH_I_C"/>
    <property type="match status" value="1"/>
</dbReference>
<dbReference type="CDD" id="cd05214">
    <property type="entry name" value="GAPDH_I_N"/>
    <property type="match status" value="1"/>
</dbReference>
<dbReference type="FunFam" id="3.30.360.10:FF:000001">
    <property type="entry name" value="Glyceraldehyde-3-phosphate dehydrogenase"/>
    <property type="match status" value="1"/>
</dbReference>
<dbReference type="FunFam" id="3.40.50.720:FF:000020">
    <property type="entry name" value="Glyceraldehyde-3-phosphate dehydrogenase"/>
    <property type="match status" value="1"/>
</dbReference>
<dbReference type="Gene3D" id="3.30.360.10">
    <property type="entry name" value="Dihydrodipicolinate Reductase, domain 2"/>
    <property type="match status" value="1"/>
</dbReference>
<dbReference type="Gene3D" id="3.40.50.720">
    <property type="entry name" value="NAD(P)-binding Rossmann-like Domain"/>
    <property type="match status" value="1"/>
</dbReference>
<dbReference type="InterPro" id="IPR020831">
    <property type="entry name" value="GlycerAld/Erythrose_P_DH"/>
</dbReference>
<dbReference type="InterPro" id="IPR020830">
    <property type="entry name" value="GlycerAld_3-P_DH_AS"/>
</dbReference>
<dbReference type="InterPro" id="IPR020829">
    <property type="entry name" value="GlycerAld_3-P_DH_cat"/>
</dbReference>
<dbReference type="InterPro" id="IPR020828">
    <property type="entry name" value="GlycerAld_3-P_DH_NAD(P)-bd"/>
</dbReference>
<dbReference type="InterPro" id="IPR006424">
    <property type="entry name" value="Glyceraldehyde-3-P_DH_1"/>
</dbReference>
<dbReference type="InterPro" id="IPR036291">
    <property type="entry name" value="NAD(P)-bd_dom_sf"/>
</dbReference>
<dbReference type="NCBIfam" id="TIGR01534">
    <property type="entry name" value="GAPDH-I"/>
    <property type="match status" value="1"/>
</dbReference>
<dbReference type="PANTHER" id="PTHR10836">
    <property type="entry name" value="GLYCERALDEHYDE 3-PHOSPHATE DEHYDROGENASE"/>
    <property type="match status" value="1"/>
</dbReference>
<dbReference type="PANTHER" id="PTHR10836:SF76">
    <property type="entry name" value="GLYCERALDEHYDE-3-PHOSPHATE DEHYDROGENASE-RELATED"/>
    <property type="match status" value="1"/>
</dbReference>
<dbReference type="Pfam" id="PF02800">
    <property type="entry name" value="Gp_dh_C"/>
    <property type="match status" value="1"/>
</dbReference>
<dbReference type="Pfam" id="PF00044">
    <property type="entry name" value="Gp_dh_N"/>
    <property type="match status" value="1"/>
</dbReference>
<dbReference type="PIRSF" id="PIRSF000149">
    <property type="entry name" value="GAP_DH"/>
    <property type="match status" value="1"/>
</dbReference>
<dbReference type="PRINTS" id="PR00078">
    <property type="entry name" value="G3PDHDRGNASE"/>
</dbReference>
<dbReference type="SMART" id="SM00846">
    <property type="entry name" value="Gp_dh_N"/>
    <property type="match status" value="1"/>
</dbReference>
<dbReference type="SUPFAM" id="SSF55347">
    <property type="entry name" value="Glyceraldehyde-3-phosphate dehydrogenase-like, C-terminal domain"/>
    <property type="match status" value="1"/>
</dbReference>
<dbReference type="SUPFAM" id="SSF51735">
    <property type="entry name" value="NAD(P)-binding Rossmann-fold domains"/>
    <property type="match status" value="1"/>
</dbReference>
<dbReference type="PROSITE" id="PS00071">
    <property type="entry name" value="GAPDH"/>
    <property type="match status" value="1"/>
</dbReference>
<protein>
    <recommendedName>
        <fullName>Glyceraldehyde-3-phosphate dehydrogenase</fullName>
        <shortName>GAPDH</shortName>
        <ecNumber>1.2.1.12</ecNumber>
    </recommendedName>
</protein>
<accession>Q00584</accession>
<accession>M1VTY0</accession>